<organism>
    <name type="scientific">Ajellomyces capsulatus (strain G186AR / H82 / ATCC MYA-2454 / RMSCC 2432)</name>
    <name type="common">Darling's disease fungus</name>
    <name type="synonym">Histoplasma capsulatum</name>
    <dbReference type="NCBI Taxonomy" id="447093"/>
    <lineage>
        <taxon>Eukaryota</taxon>
        <taxon>Fungi</taxon>
        <taxon>Dikarya</taxon>
        <taxon>Ascomycota</taxon>
        <taxon>Pezizomycotina</taxon>
        <taxon>Eurotiomycetes</taxon>
        <taxon>Eurotiomycetidae</taxon>
        <taxon>Onygenales</taxon>
        <taxon>Ajellomycetaceae</taxon>
        <taxon>Histoplasma</taxon>
    </lineage>
</organism>
<name>ACUK_AJECG</name>
<proteinExistence type="inferred from homology"/>
<gene>
    <name type="ORF">HCBG_00867</name>
</gene>
<sequence length="775" mass="82839">MTASTQNGSPTPPPAAPTATNQESKNMTANPADASESQSPANEKGSGTAESGQKHTSTAANAKDPLRPRRKKAKRACFACQRAHLTCGDERPCQRCIKRGLQDACHDGVRKKAKYLHDAPNEALMPGIRRNFYNQANATRTNANQQQNGPNSNSNKDSRQNVAANFYSPQSASNFDVYTQAKSQQGQGHIPPTVMQDTSINPSAFQAPSPTSTPNFDLSSNPPNRNLSSAMTQTPSSASNQTQDPFGAAFFDPSHPALFNFDIASMNFGNRYGALEFGMLGHMATGAGDTPPSDSATQRGSIGRSSGTFTAQNFGDSTNTQSPFLFGDPVLNDWNPSGQSQTNPRNNNIYNQNTVAGQMGEQHPNAFAIESAPMNFASPGSTESPQMTTMNQFDEANAKFSSRTALMHQTNPHQPPPISTPGLKHQGFQVGVKRRYRSPSSIYESVKEPYSYTSGFHNLTAFIQRRFSPQKTLQIAKALASIRPSFIATTKTLNQDDLIFMEKCFQRTLWEYEDFINACGTPTIVCRRTGEIAAVGKEFSILTGWKKEVLLGKEPNLNVNTGGSSPRGSGTFTPRNGNGVDPHSGMSAAGGGGGRTQPVFLAELLDDDSVIEFYEDFAKLAFGDSRGSVMTTCKLLKYKTKEDSAALFQGKEAQQGGSDGKGGGGGGDVAATAATTSTSTSNGANSSGHANANRNNTNPKNSSPPSSSSAAAAGPLHGAQLSPKQTWGKRGIAGEAGMNQLGFRDGKVECSYCWTVKRDVFDIPMLIVMNFLPCI</sequence>
<reference key="1">
    <citation type="submission" date="2009-02" db="EMBL/GenBank/DDBJ databases">
        <title>The genome sequence of Ajellomyces capsulatus strain G186AR.</title>
        <authorList>
            <person name="Champion M."/>
            <person name="Cuomo C.A."/>
            <person name="Ma L.-J."/>
            <person name="Henn M.R."/>
            <person name="Sil A."/>
            <person name="Goldman B."/>
            <person name="Young S.K."/>
            <person name="Kodira C.D."/>
            <person name="Zeng Q."/>
            <person name="Koehrsen M."/>
            <person name="Alvarado L."/>
            <person name="Berlin A."/>
            <person name="Borenstein D."/>
            <person name="Chen Z."/>
            <person name="Engels R."/>
            <person name="Freedman E."/>
            <person name="Gellesch M."/>
            <person name="Goldberg J."/>
            <person name="Griggs A."/>
            <person name="Gujja S."/>
            <person name="Heiman D."/>
            <person name="Hepburn T."/>
            <person name="Howarth C."/>
            <person name="Jen D."/>
            <person name="Larson L."/>
            <person name="Lewis B."/>
            <person name="Mehta T."/>
            <person name="Park D."/>
            <person name="Pearson M."/>
            <person name="Roberts A."/>
            <person name="Saif S."/>
            <person name="Shea T."/>
            <person name="Shenoy N."/>
            <person name="Sisk P."/>
            <person name="Stolte C."/>
            <person name="Sykes S."/>
            <person name="Walk T."/>
            <person name="White J."/>
            <person name="Yandava C."/>
            <person name="Klein B."/>
            <person name="McEwen J.G."/>
            <person name="Puccia R."/>
            <person name="Goldman G.H."/>
            <person name="Felipe M.S."/>
            <person name="Nino-Vega G."/>
            <person name="San-Blas G."/>
            <person name="Taylor J."/>
            <person name="Mendoza L."/>
            <person name="Galagan J.E."/>
            <person name="Nusbaum C."/>
            <person name="Birren B.W."/>
        </authorList>
    </citation>
    <scope>NUCLEOTIDE SEQUENCE [LARGE SCALE GENOMIC DNA]</scope>
    <source>
        <strain>G186AR / H82 / ATCC MYA-2454 / RMSCC 2432</strain>
    </source>
</reference>
<protein>
    <recommendedName>
        <fullName>Transcription activator of gluconeogenesis HCBG_00867</fullName>
    </recommendedName>
</protein>
<comment type="function">
    <text evidence="1">Transcription factor which regulates nonfermentable carbon utilization. Activator of gluconeogenetic genes (By similarity).</text>
</comment>
<comment type="subcellular location">
    <subcellularLocation>
        <location evidence="2">Nucleus</location>
    </subcellularLocation>
</comment>
<comment type="similarity">
    <text evidence="4">Belongs to the ERT1/acuK family.</text>
</comment>
<evidence type="ECO:0000250" key="1"/>
<evidence type="ECO:0000255" key="2">
    <source>
        <dbReference type="PROSITE-ProRule" id="PRU00227"/>
    </source>
</evidence>
<evidence type="ECO:0000256" key="3">
    <source>
        <dbReference type="SAM" id="MobiDB-lite"/>
    </source>
</evidence>
<evidence type="ECO:0000305" key="4"/>
<keyword id="KW-0010">Activator</keyword>
<keyword id="KW-0238">DNA-binding</keyword>
<keyword id="KW-0312">Gluconeogenesis</keyword>
<keyword id="KW-0479">Metal-binding</keyword>
<keyword id="KW-0539">Nucleus</keyword>
<keyword id="KW-1185">Reference proteome</keyword>
<keyword id="KW-0804">Transcription</keyword>
<keyword id="KW-0805">Transcription regulation</keyword>
<keyword id="KW-0862">Zinc</keyword>
<feature type="chain" id="PRO_0000406424" description="Transcription activator of gluconeogenesis HCBG_00867">
    <location>
        <begin position="1"/>
        <end position="775"/>
    </location>
</feature>
<feature type="DNA-binding region" description="Zn(2)-C6 fungal-type" evidence="2">
    <location>
        <begin position="77"/>
        <end position="105"/>
    </location>
</feature>
<feature type="region of interest" description="Disordered" evidence="3">
    <location>
        <begin position="1"/>
        <end position="70"/>
    </location>
</feature>
<feature type="region of interest" description="Disordered" evidence="3">
    <location>
        <begin position="179"/>
        <end position="248"/>
    </location>
</feature>
<feature type="region of interest" description="Disordered" evidence="3">
    <location>
        <begin position="286"/>
        <end position="351"/>
    </location>
</feature>
<feature type="region of interest" description="Disordered" evidence="3">
    <location>
        <begin position="556"/>
        <end position="592"/>
    </location>
</feature>
<feature type="region of interest" description="Disordered" evidence="3">
    <location>
        <begin position="649"/>
        <end position="725"/>
    </location>
</feature>
<feature type="compositionally biased region" description="Polar residues" evidence="3">
    <location>
        <begin position="21"/>
        <end position="41"/>
    </location>
</feature>
<feature type="compositionally biased region" description="Polar residues" evidence="3">
    <location>
        <begin position="48"/>
        <end position="60"/>
    </location>
</feature>
<feature type="compositionally biased region" description="Polar residues" evidence="3">
    <location>
        <begin position="195"/>
        <end position="217"/>
    </location>
</feature>
<feature type="compositionally biased region" description="Low complexity" evidence="3">
    <location>
        <begin position="218"/>
        <end position="229"/>
    </location>
</feature>
<feature type="compositionally biased region" description="Polar residues" evidence="3">
    <location>
        <begin position="230"/>
        <end position="244"/>
    </location>
</feature>
<feature type="compositionally biased region" description="Polar residues" evidence="3">
    <location>
        <begin position="292"/>
        <end position="323"/>
    </location>
</feature>
<feature type="compositionally biased region" description="Polar residues" evidence="3">
    <location>
        <begin position="334"/>
        <end position="351"/>
    </location>
</feature>
<feature type="compositionally biased region" description="Polar residues" evidence="3">
    <location>
        <begin position="557"/>
        <end position="576"/>
    </location>
</feature>
<feature type="compositionally biased region" description="Gly residues" evidence="3">
    <location>
        <begin position="657"/>
        <end position="668"/>
    </location>
</feature>
<feature type="compositionally biased region" description="Low complexity" evidence="3">
    <location>
        <begin position="669"/>
        <end position="713"/>
    </location>
</feature>
<dbReference type="EMBL" id="GG663363">
    <property type="protein sequence ID" value="EEH11412.1"/>
    <property type="molecule type" value="Genomic_DNA"/>
</dbReference>
<dbReference type="RefSeq" id="XP_045291892.1">
    <property type="nucleotide sequence ID" value="XM_045427917.1"/>
</dbReference>
<dbReference type="SMR" id="C0NCM1"/>
<dbReference type="FunCoup" id="C0NCM1">
    <property type="interactions" value="197"/>
</dbReference>
<dbReference type="STRING" id="447093.C0NCM1"/>
<dbReference type="GeneID" id="69033884"/>
<dbReference type="VEuPathDB" id="FungiDB:I7I50_02853"/>
<dbReference type="HOGENOM" id="CLU_010748_1_0_1"/>
<dbReference type="InParanoid" id="C0NCM1"/>
<dbReference type="Proteomes" id="UP000001631">
    <property type="component" value="Unassembled WGS sequence"/>
</dbReference>
<dbReference type="GO" id="GO:0005634">
    <property type="term" value="C:nucleus"/>
    <property type="evidence" value="ECO:0007669"/>
    <property type="project" value="UniProtKB-SubCell"/>
</dbReference>
<dbReference type="GO" id="GO:0000981">
    <property type="term" value="F:DNA-binding transcription factor activity, RNA polymerase II-specific"/>
    <property type="evidence" value="ECO:0007669"/>
    <property type="project" value="InterPro"/>
</dbReference>
<dbReference type="GO" id="GO:0000977">
    <property type="term" value="F:RNA polymerase II transcription regulatory region sequence-specific DNA binding"/>
    <property type="evidence" value="ECO:0007669"/>
    <property type="project" value="TreeGrafter"/>
</dbReference>
<dbReference type="GO" id="GO:0008270">
    <property type="term" value="F:zinc ion binding"/>
    <property type="evidence" value="ECO:0007669"/>
    <property type="project" value="InterPro"/>
</dbReference>
<dbReference type="GO" id="GO:0009267">
    <property type="term" value="P:cellular response to starvation"/>
    <property type="evidence" value="ECO:0007669"/>
    <property type="project" value="TreeGrafter"/>
</dbReference>
<dbReference type="GO" id="GO:0006094">
    <property type="term" value="P:gluconeogenesis"/>
    <property type="evidence" value="ECO:0007669"/>
    <property type="project" value="UniProtKB-KW"/>
</dbReference>
<dbReference type="CDD" id="cd00067">
    <property type="entry name" value="GAL4"/>
    <property type="match status" value="1"/>
</dbReference>
<dbReference type="Gene3D" id="4.10.240.10">
    <property type="entry name" value="Zn(2)-C6 fungal-type DNA-binding domain"/>
    <property type="match status" value="1"/>
</dbReference>
<dbReference type="InterPro" id="IPR050335">
    <property type="entry name" value="ERT1_acuK_gluconeogen_tf"/>
</dbReference>
<dbReference type="InterPro" id="IPR056751">
    <property type="entry name" value="PAS_13"/>
</dbReference>
<dbReference type="InterPro" id="IPR036864">
    <property type="entry name" value="Zn2-C6_fun-type_DNA-bd_sf"/>
</dbReference>
<dbReference type="InterPro" id="IPR001138">
    <property type="entry name" value="Zn2Cys6_DnaBD"/>
</dbReference>
<dbReference type="PANTHER" id="PTHR47659:SF1">
    <property type="entry name" value="TRANSCRIPTION ACTIVATOR OF GLUCONEOGENESIS ERT1"/>
    <property type="match status" value="1"/>
</dbReference>
<dbReference type="PANTHER" id="PTHR47659">
    <property type="entry name" value="ZN(II)2CYS6 TRANSCRIPTION FACTOR (EUROFUNG)-RELATED"/>
    <property type="match status" value="1"/>
</dbReference>
<dbReference type="Pfam" id="PF24990">
    <property type="entry name" value="PAS_13"/>
    <property type="match status" value="1"/>
</dbReference>
<dbReference type="SMART" id="SM00066">
    <property type="entry name" value="GAL4"/>
    <property type="match status" value="1"/>
</dbReference>
<dbReference type="SUPFAM" id="SSF57701">
    <property type="entry name" value="Zn2/Cys6 DNA-binding domain"/>
    <property type="match status" value="1"/>
</dbReference>
<dbReference type="PROSITE" id="PS50048">
    <property type="entry name" value="ZN2_CY6_FUNGAL_2"/>
    <property type="match status" value="1"/>
</dbReference>
<accession>C0NCM1</accession>